<organism>
    <name type="scientific">Odorrana hainanensis</name>
    <name type="common">Odor frog</name>
    <name type="synonym">Rana hainanensis</name>
    <dbReference type="NCBI Taxonomy" id="431935"/>
    <lineage>
        <taxon>Eukaryota</taxon>
        <taxon>Metazoa</taxon>
        <taxon>Chordata</taxon>
        <taxon>Craniata</taxon>
        <taxon>Vertebrata</taxon>
        <taxon>Euteleostomi</taxon>
        <taxon>Amphibia</taxon>
        <taxon>Batrachia</taxon>
        <taxon>Anura</taxon>
        <taxon>Neobatrachia</taxon>
        <taxon>Ranoidea</taxon>
        <taxon>Ranidae</taxon>
        <taxon>Odorrana</taxon>
    </lineage>
</organism>
<keyword id="KW-0027">Amidation</keyword>
<keyword id="KW-0878">Amphibian defense peptide</keyword>
<keyword id="KW-0044">Antibiotic</keyword>
<keyword id="KW-0929">Antimicrobial</keyword>
<keyword id="KW-0165">Cleavage on pair of basic residues</keyword>
<keyword id="KW-0204">Cytolysis</keyword>
<keyword id="KW-0903">Direct protein sequencing</keyword>
<keyword id="KW-0295">Fungicide</keyword>
<keyword id="KW-0354">Hemolysis</keyword>
<keyword id="KW-0964">Secreted</keyword>
<keyword id="KW-0732">Signal</keyword>
<protein>
    <recommendedName>
        <fullName evidence="5">Temporin-HN1</fullName>
    </recommendedName>
</protein>
<name>TP1_ODOHA</name>
<sequence length="62" mass="7223">MFTLKKSLLLLLFLGTINLSLSEQERNAEEERRDDPEEMDAEVEKRAILTTLANWARKFLGK</sequence>
<proteinExistence type="evidence at protein level"/>
<dbReference type="EMBL" id="HQ735107">
    <property type="protein sequence ID" value="ADV36130.1"/>
    <property type="molecule type" value="mRNA"/>
</dbReference>
<dbReference type="GO" id="GO:0005576">
    <property type="term" value="C:extracellular region"/>
    <property type="evidence" value="ECO:0007669"/>
    <property type="project" value="UniProtKB-SubCell"/>
</dbReference>
<dbReference type="GO" id="GO:0050832">
    <property type="term" value="P:defense response to fungus"/>
    <property type="evidence" value="ECO:0007669"/>
    <property type="project" value="UniProtKB-KW"/>
</dbReference>
<dbReference type="GO" id="GO:0050829">
    <property type="term" value="P:defense response to Gram-negative bacterium"/>
    <property type="evidence" value="ECO:0007669"/>
    <property type="project" value="UniProtKB-ARBA"/>
</dbReference>
<dbReference type="GO" id="GO:0050830">
    <property type="term" value="P:defense response to Gram-positive bacterium"/>
    <property type="evidence" value="ECO:0007669"/>
    <property type="project" value="UniProtKB-ARBA"/>
</dbReference>
<dbReference type="GO" id="GO:0031640">
    <property type="term" value="P:killing of cells of another organism"/>
    <property type="evidence" value="ECO:0007669"/>
    <property type="project" value="UniProtKB-KW"/>
</dbReference>
<dbReference type="InterPro" id="IPR004275">
    <property type="entry name" value="Frog_antimicrobial_propeptide"/>
</dbReference>
<dbReference type="Pfam" id="PF03032">
    <property type="entry name" value="FSAP_sig_propep"/>
    <property type="match status" value="1"/>
</dbReference>
<evidence type="ECO:0000255" key="1"/>
<evidence type="ECO:0000269" key="2">
    <source>
    </source>
</evidence>
<evidence type="ECO:0000305" key="3"/>
<evidence type="ECO:0000305" key="4">
    <source>
    </source>
</evidence>
<evidence type="ECO:0000312" key="5">
    <source>
        <dbReference type="EMBL" id="ADV36130.1"/>
    </source>
</evidence>
<reference evidence="3 5" key="1">
    <citation type="journal article" date="2012" name="Peptides">
        <title>Novel antimicrobial peptides isolated from the skin secretions of Hainan odorous frog, Odorrana hainanensis.</title>
        <authorList>
            <person name="Wang H."/>
            <person name="Yu Z."/>
            <person name="Hu Y."/>
            <person name="Li F."/>
            <person name="Liu L."/>
            <person name="Zheng H."/>
            <person name="Meng H."/>
            <person name="Yang S."/>
            <person name="Yang X."/>
            <person name="Liu J."/>
        </authorList>
    </citation>
    <scope>NUCLEOTIDE SEQUENCE [MRNA]</scope>
    <scope>PROTEIN SEQUENCE OF 47-60</scope>
    <scope>SYNTHESIS OF 47-60</scope>
    <scope>FUNCTION</scope>
    <scope>SUBCELLULAR LOCATION</scope>
    <scope>MASS SPECTROMETRY</scope>
    <scope>AMIDATION AT LEU-60</scope>
    <source>
        <tissue evidence="2">Skin</tissue>
        <tissue evidence="2">Skin secretion</tissue>
    </source>
</reference>
<comment type="function">
    <text evidence="2">Has antimicrobial activity against some Gram-positive bacteria and fungi but has no activity against a range of Gram-negative bacteria except P.faecalis. Active against the Gram-positive bacteria S.aureus ATCC 25923 (MIC=37.5 uM), S.carnosus KHS (MIC=37.5 uM), B.licheniformis X39 (MIC=19 uM), R.rhodochrous X15 (MIC=4.8 uM), is virtually inactive against E.faecalis 981 (MIC=150 uM) and inactive against E.faecium 091299. Has some antimicrobial activity against the Gram-negative bacterium P.faecalis X29 (MIC=75 uM) and is inactive against E.coli, P.aeruginosa and S.typhi. Has antifungal activity against C.albicans ATCC 2002 (MIC=19 uM) and lower activity against the slime mold 090223 (MIC=75 uM). Has low hemolytic activity against human erythrocytes (LC(50)=75 uM).</text>
</comment>
<comment type="subcellular location">
    <subcellularLocation>
        <location evidence="2">Secreted</location>
    </subcellularLocation>
</comment>
<comment type="tissue specificity">
    <text evidence="4">Expressed by the skin glands.</text>
</comment>
<comment type="mass spectrometry" mass="1617.0" method="Electrospray" evidence="2"/>
<comment type="similarity">
    <text evidence="1">Belongs to the frog skin active peptide (FSAP) family. Temporin subfamily.</text>
</comment>
<feature type="signal peptide" evidence="1">
    <location>
        <begin position="1"/>
        <end position="22"/>
    </location>
</feature>
<feature type="propeptide" id="PRO_0000423525" evidence="1 2">
    <location>
        <begin position="23"/>
        <end position="44"/>
    </location>
</feature>
<feature type="peptide" id="PRO_0000423526" description="Temporin-HN1" evidence="2">
    <location>
        <begin position="47"/>
        <end position="60"/>
    </location>
</feature>
<feature type="modified residue" description="Leucine amide" evidence="2">
    <location>
        <position position="60"/>
    </location>
</feature>
<accession>E7EKD0</accession>